<reference key="1">
    <citation type="submission" date="2007-11" db="EMBL/GenBank/DDBJ databases">
        <title>Complete genome sequence of Clostridium phytofermentans ISDg.</title>
        <authorList>
            <person name="Leschine S.B."/>
            <person name="Warnick T.A."/>
            <person name="Blanchard J.L."/>
            <person name="Schnell D.J."/>
            <person name="Petit E.L."/>
            <person name="LaTouf W.G."/>
            <person name="Copeland A."/>
            <person name="Lucas S."/>
            <person name="Lapidus A."/>
            <person name="Barry K."/>
            <person name="Glavina del Rio T."/>
            <person name="Dalin E."/>
            <person name="Tice H."/>
            <person name="Pitluck S."/>
            <person name="Kiss H."/>
            <person name="Brettin T."/>
            <person name="Bruce D."/>
            <person name="Detter J.C."/>
            <person name="Han C."/>
            <person name="Kuske C."/>
            <person name="Schmutz J."/>
            <person name="Larimer F."/>
            <person name="Land M."/>
            <person name="Hauser L."/>
            <person name="Kyrpides N."/>
            <person name="Kim E.A."/>
            <person name="Richardson P."/>
        </authorList>
    </citation>
    <scope>NUCLEOTIDE SEQUENCE [LARGE SCALE GENOMIC DNA]</scope>
    <source>
        <strain>ATCC 700394 / DSM 18823 / ISDg</strain>
    </source>
</reference>
<name>ILVC_LACP7</name>
<proteinExistence type="inferred from homology"/>
<keyword id="KW-0028">Amino-acid biosynthesis</keyword>
<keyword id="KW-0100">Branched-chain amino acid biosynthesis</keyword>
<keyword id="KW-0460">Magnesium</keyword>
<keyword id="KW-0479">Metal-binding</keyword>
<keyword id="KW-0521">NADP</keyword>
<keyword id="KW-0560">Oxidoreductase</keyword>
<keyword id="KW-1185">Reference proteome</keyword>
<accession>A9KQ65</accession>
<feature type="chain" id="PRO_1000080625" description="Ketol-acid reductoisomerase (NADP(+))">
    <location>
        <begin position="1"/>
        <end position="336"/>
    </location>
</feature>
<feature type="domain" description="KARI N-terminal Rossmann" evidence="2">
    <location>
        <begin position="2"/>
        <end position="182"/>
    </location>
</feature>
<feature type="domain" description="KARI C-terminal knotted" evidence="3">
    <location>
        <begin position="183"/>
        <end position="328"/>
    </location>
</feature>
<feature type="active site" evidence="1">
    <location>
        <position position="108"/>
    </location>
</feature>
<feature type="binding site" evidence="1">
    <location>
        <begin position="25"/>
        <end position="28"/>
    </location>
    <ligand>
        <name>NADP(+)</name>
        <dbReference type="ChEBI" id="CHEBI:58349"/>
    </ligand>
</feature>
<feature type="binding site" evidence="1">
    <location>
        <position position="51"/>
    </location>
    <ligand>
        <name>NADP(+)</name>
        <dbReference type="ChEBI" id="CHEBI:58349"/>
    </ligand>
</feature>
<feature type="binding site" evidence="1">
    <location>
        <position position="53"/>
    </location>
    <ligand>
        <name>NADP(+)</name>
        <dbReference type="ChEBI" id="CHEBI:58349"/>
    </ligand>
</feature>
<feature type="binding site" evidence="1">
    <location>
        <begin position="83"/>
        <end position="86"/>
    </location>
    <ligand>
        <name>NADP(+)</name>
        <dbReference type="ChEBI" id="CHEBI:58349"/>
    </ligand>
</feature>
<feature type="binding site" evidence="1">
    <location>
        <position position="134"/>
    </location>
    <ligand>
        <name>NADP(+)</name>
        <dbReference type="ChEBI" id="CHEBI:58349"/>
    </ligand>
</feature>
<feature type="binding site" evidence="1">
    <location>
        <position position="191"/>
    </location>
    <ligand>
        <name>Mg(2+)</name>
        <dbReference type="ChEBI" id="CHEBI:18420"/>
        <label>1</label>
    </ligand>
</feature>
<feature type="binding site" evidence="1">
    <location>
        <position position="191"/>
    </location>
    <ligand>
        <name>Mg(2+)</name>
        <dbReference type="ChEBI" id="CHEBI:18420"/>
        <label>2</label>
    </ligand>
</feature>
<feature type="binding site" evidence="1">
    <location>
        <position position="195"/>
    </location>
    <ligand>
        <name>Mg(2+)</name>
        <dbReference type="ChEBI" id="CHEBI:18420"/>
        <label>1</label>
    </ligand>
</feature>
<feature type="binding site" evidence="1">
    <location>
        <position position="227"/>
    </location>
    <ligand>
        <name>Mg(2+)</name>
        <dbReference type="ChEBI" id="CHEBI:18420"/>
        <label>2</label>
    </ligand>
</feature>
<feature type="binding site" evidence="1">
    <location>
        <position position="231"/>
    </location>
    <ligand>
        <name>Mg(2+)</name>
        <dbReference type="ChEBI" id="CHEBI:18420"/>
        <label>2</label>
    </ligand>
</feature>
<feature type="binding site" evidence="1">
    <location>
        <position position="252"/>
    </location>
    <ligand>
        <name>substrate</name>
    </ligand>
</feature>
<gene>
    <name evidence="1" type="primary">ilvC</name>
    <name type="ordered locus">Cphy_3020</name>
</gene>
<evidence type="ECO:0000255" key="1">
    <source>
        <dbReference type="HAMAP-Rule" id="MF_00435"/>
    </source>
</evidence>
<evidence type="ECO:0000255" key="2">
    <source>
        <dbReference type="PROSITE-ProRule" id="PRU01197"/>
    </source>
</evidence>
<evidence type="ECO:0000255" key="3">
    <source>
        <dbReference type="PROSITE-ProRule" id="PRU01198"/>
    </source>
</evidence>
<sequence>MAKIYYQQDCNLSLLEGKTVAVIGYGSQGHAHALNMKESGVHVIIGLYEGSKSWAKASAAGFEVYTAAEAAKKADVIMILINDEKQAKMYKESIEPNLEAGNALMFAHGFAIHFGQIIPPKDVDVLMIAPKGPGHTVRSQYQEGQGVPCLIAVHQDATGKAHDLGLAYALAIGGARAGVLETTFREETETDLFGEQAVLCGGVTALMKCGFEVLVEAGYEPESAYFECIHEMKLIVDLINESGFAGMRYSISNTAEYGDYITGPKIITEDTKNAMRQVLKDIQEGVFARNWLLENQVGCPNFNAKRRMESEHQLEKVGAELRGLMSWTQKKKLIDN</sequence>
<organism>
    <name type="scientific">Lachnoclostridium phytofermentans (strain ATCC 700394 / DSM 18823 / ISDg)</name>
    <name type="common">Clostridium phytofermentans</name>
    <dbReference type="NCBI Taxonomy" id="357809"/>
    <lineage>
        <taxon>Bacteria</taxon>
        <taxon>Bacillati</taxon>
        <taxon>Bacillota</taxon>
        <taxon>Clostridia</taxon>
        <taxon>Lachnospirales</taxon>
        <taxon>Lachnospiraceae</taxon>
    </lineage>
</organism>
<protein>
    <recommendedName>
        <fullName evidence="1">Ketol-acid reductoisomerase (NADP(+))</fullName>
        <shortName evidence="1">KARI</shortName>
        <ecNumber evidence="1">1.1.1.86</ecNumber>
    </recommendedName>
    <alternativeName>
        <fullName evidence="1">Acetohydroxy-acid isomeroreductase</fullName>
        <shortName evidence="1">AHIR</shortName>
    </alternativeName>
    <alternativeName>
        <fullName evidence="1">Alpha-keto-beta-hydroxylacyl reductoisomerase</fullName>
    </alternativeName>
    <alternativeName>
        <fullName evidence="1">Ketol-acid reductoisomerase type 1</fullName>
    </alternativeName>
    <alternativeName>
        <fullName evidence="1">Ketol-acid reductoisomerase type I</fullName>
    </alternativeName>
</protein>
<dbReference type="EC" id="1.1.1.86" evidence="1"/>
<dbReference type="EMBL" id="CP000885">
    <property type="protein sequence ID" value="ABX43377.1"/>
    <property type="molecule type" value="Genomic_DNA"/>
</dbReference>
<dbReference type="RefSeq" id="WP_012201028.1">
    <property type="nucleotide sequence ID" value="NC_010001.1"/>
</dbReference>
<dbReference type="SMR" id="A9KQ65"/>
<dbReference type="STRING" id="357809.Cphy_3020"/>
<dbReference type="KEGG" id="cpy:Cphy_3020"/>
<dbReference type="eggNOG" id="COG0059">
    <property type="taxonomic scope" value="Bacteria"/>
</dbReference>
<dbReference type="HOGENOM" id="CLU_033821_0_1_9"/>
<dbReference type="OrthoDB" id="9804088at2"/>
<dbReference type="UniPathway" id="UPA00047">
    <property type="reaction ID" value="UER00056"/>
</dbReference>
<dbReference type="UniPathway" id="UPA00049">
    <property type="reaction ID" value="UER00060"/>
</dbReference>
<dbReference type="Proteomes" id="UP000000370">
    <property type="component" value="Chromosome"/>
</dbReference>
<dbReference type="GO" id="GO:0005829">
    <property type="term" value="C:cytosol"/>
    <property type="evidence" value="ECO:0007669"/>
    <property type="project" value="TreeGrafter"/>
</dbReference>
<dbReference type="GO" id="GO:0004455">
    <property type="term" value="F:ketol-acid reductoisomerase activity"/>
    <property type="evidence" value="ECO:0007669"/>
    <property type="project" value="UniProtKB-UniRule"/>
</dbReference>
<dbReference type="GO" id="GO:0000287">
    <property type="term" value="F:magnesium ion binding"/>
    <property type="evidence" value="ECO:0007669"/>
    <property type="project" value="UniProtKB-UniRule"/>
</dbReference>
<dbReference type="GO" id="GO:0050661">
    <property type="term" value="F:NADP binding"/>
    <property type="evidence" value="ECO:0007669"/>
    <property type="project" value="InterPro"/>
</dbReference>
<dbReference type="GO" id="GO:0009097">
    <property type="term" value="P:isoleucine biosynthetic process"/>
    <property type="evidence" value="ECO:0007669"/>
    <property type="project" value="UniProtKB-UniRule"/>
</dbReference>
<dbReference type="GO" id="GO:0009099">
    <property type="term" value="P:L-valine biosynthetic process"/>
    <property type="evidence" value="ECO:0007669"/>
    <property type="project" value="UniProtKB-UniRule"/>
</dbReference>
<dbReference type="FunFam" id="3.40.50.720:FF:000023">
    <property type="entry name" value="Ketol-acid reductoisomerase (NADP(+))"/>
    <property type="match status" value="1"/>
</dbReference>
<dbReference type="Gene3D" id="6.10.240.10">
    <property type="match status" value="1"/>
</dbReference>
<dbReference type="Gene3D" id="3.40.50.720">
    <property type="entry name" value="NAD(P)-binding Rossmann-like Domain"/>
    <property type="match status" value="1"/>
</dbReference>
<dbReference type="HAMAP" id="MF_00435">
    <property type="entry name" value="IlvC"/>
    <property type="match status" value="1"/>
</dbReference>
<dbReference type="InterPro" id="IPR008927">
    <property type="entry name" value="6-PGluconate_DH-like_C_sf"/>
</dbReference>
<dbReference type="InterPro" id="IPR013023">
    <property type="entry name" value="KARI"/>
</dbReference>
<dbReference type="InterPro" id="IPR000506">
    <property type="entry name" value="KARI_C"/>
</dbReference>
<dbReference type="InterPro" id="IPR013116">
    <property type="entry name" value="KARI_N"/>
</dbReference>
<dbReference type="InterPro" id="IPR014359">
    <property type="entry name" value="KARI_prok"/>
</dbReference>
<dbReference type="InterPro" id="IPR036291">
    <property type="entry name" value="NAD(P)-bd_dom_sf"/>
</dbReference>
<dbReference type="NCBIfam" id="TIGR00465">
    <property type="entry name" value="ilvC"/>
    <property type="match status" value="1"/>
</dbReference>
<dbReference type="NCBIfam" id="NF004017">
    <property type="entry name" value="PRK05479.1"/>
    <property type="match status" value="1"/>
</dbReference>
<dbReference type="NCBIfam" id="NF009940">
    <property type="entry name" value="PRK13403.1"/>
    <property type="match status" value="1"/>
</dbReference>
<dbReference type="PANTHER" id="PTHR21371">
    <property type="entry name" value="KETOL-ACID REDUCTOISOMERASE, MITOCHONDRIAL"/>
    <property type="match status" value="1"/>
</dbReference>
<dbReference type="PANTHER" id="PTHR21371:SF1">
    <property type="entry name" value="KETOL-ACID REDUCTOISOMERASE, MITOCHONDRIAL"/>
    <property type="match status" value="1"/>
</dbReference>
<dbReference type="Pfam" id="PF01450">
    <property type="entry name" value="KARI_C"/>
    <property type="match status" value="1"/>
</dbReference>
<dbReference type="Pfam" id="PF07991">
    <property type="entry name" value="KARI_N"/>
    <property type="match status" value="1"/>
</dbReference>
<dbReference type="PIRSF" id="PIRSF000116">
    <property type="entry name" value="IlvC_gammaproteo"/>
    <property type="match status" value="1"/>
</dbReference>
<dbReference type="SUPFAM" id="SSF48179">
    <property type="entry name" value="6-phosphogluconate dehydrogenase C-terminal domain-like"/>
    <property type="match status" value="1"/>
</dbReference>
<dbReference type="SUPFAM" id="SSF51735">
    <property type="entry name" value="NAD(P)-binding Rossmann-fold domains"/>
    <property type="match status" value="1"/>
</dbReference>
<dbReference type="PROSITE" id="PS51851">
    <property type="entry name" value="KARI_C"/>
    <property type="match status" value="1"/>
</dbReference>
<dbReference type="PROSITE" id="PS51850">
    <property type="entry name" value="KARI_N"/>
    <property type="match status" value="1"/>
</dbReference>
<comment type="function">
    <text evidence="1">Involved in the biosynthesis of branched-chain amino acids (BCAA). Catalyzes an alkyl-migration followed by a ketol-acid reduction of (S)-2-acetolactate (S2AL) to yield (R)-2,3-dihydroxy-isovalerate. In the isomerase reaction, S2AL is rearranged via a Mg-dependent methyl migration to produce 3-hydroxy-3-methyl-2-ketobutyrate (HMKB). In the reductase reaction, this 2-ketoacid undergoes a metal-dependent reduction by NADPH to yield (R)-2,3-dihydroxy-isovalerate.</text>
</comment>
<comment type="catalytic activity">
    <reaction evidence="1">
        <text>(2R)-2,3-dihydroxy-3-methylbutanoate + NADP(+) = (2S)-2-acetolactate + NADPH + H(+)</text>
        <dbReference type="Rhea" id="RHEA:22068"/>
        <dbReference type="ChEBI" id="CHEBI:15378"/>
        <dbReference type="ChEBI" id="CHEBI:49072"/>
        <dbReference type="ChEBI" id="CHEBI:57783"/>
        <dbReference type="ChEBI" id="CHEBI:58349"/>
        <dbReference type="ChEBI" id="CHEBI:58476"/>
        <dbReference type="EC" id="1.1.1.86"/>
    </reaction>
</comment>
<comment type="catalytic activity">
    <reaction evidence="1">
        <text>(2R,3R)-2,3-dihydroxy-3-methylpentanoate + NADP(+) = (S)-2-ethyl-2-hydroxy-3-oxobutanoate + NADPH + H(+)</text>
        <dbReference type="Rhea" id="RHEA:13493"/>
        <dbReference type="ChEBI" id="CHEBI:15378"/>
        <dbReference type="ChEBI" id="CHEBI:49256"/>
        <dbReference type="ChEBI" id="CHEBI:49258"/>
        <dbReference type="ChEBI" id="CHEBI:57783"/>
        <dbReference type="ChEBI" id="CHEBI:58349"/>
        <dbReference type="EC" id="1.1.1.86"/>
    </reaction>
</comment>
<comment type="cofactor">
    <cofactor evidence="1">
        <name>Mg(2+)</name>
        <dbReference type="ChEBI" id="CHEBI:18420"/>
    </cofactor>
    <text evidence="1">Binds 2 magnesium ions per subunit.</text>
</comment>
<comment type="pathway">
    <text evidence="1">Amino-acid biosynthesis; L-isoleucine biosynthesis; L-isoleucine from 2-oxobutanoate: step 2/4.</text>
</comment>
<comment type="pathway">
    <text evidence="1">Amino-acid biosynthesis; L-valine biosynthesis; L-valine from pyruvate: step 2/4.</text>
</comment>
<comment type="similarity">
    <text evidence="1">Belongs to the ketol-acid reductoisomerase family.</text>
</comment>